<protein>
    <recommendedName>
        <fullName evidence="1">Small ribosomal subunit protein bS20</fullName>
    </recommendedName>
    <alternativeName>
        <fullName evidence="2">30S ribosomal protein S20</fullName>
    </alternativeName>
</protein>
<feature type="chain" id="PRO_0000260119" description="Small ribosomal subunit protein bS20">
    <location>
        <begin position="1"/>
        <end position="90"/>
    </location>
</feature>
<keyword id="KW-1185">Reference proteome</keyword>
<keyword id="KW-0687">Ribonucleoprotein</keyword>
<keyword id="KW-0689">Ribosomal protein</keyword>
<keyword id="KW-0694">RNA-binding</keyword>
<keyword id="KW-0699">rRNA-binding</keyword>
<organism>
    <name type="scientific">Francisella tularensis subsp. holarctica (strain LVS)</name>
    <dbReference type="NCBI Taxonomy" id="376619"/>
    <lineage>
        <taxon>Bacteria</taxon>
        <taxon>Pseudomonadati</taxon>
        <taxon>Pseudomonadota</taxon>
        <taxon>Gammaproteobacteria</taxon>
        <taxon>Thiotrichales</taxon>
        <taxon>Francisellaceae</taxon>
        <taxon>Francisella</taxon>
    </lineage>
</organism>
<accession>Q2A5X7</accession>
<evidence type="ECO:0000255" key="1">
    <source>
        <dbReference type="HAMAP-Rule" id="MF_00500"/>
    </source>
</evidence>
<evidence type="ECO:0000305" key="2"/>
<gene>
    <name evidence="1" type="primary">rpsT</name>
    <name type="ordered locus">FTL_0070</name>
</gene>
<comment type="function">
    <text evidence="1">Binds directly to 16S ribosomal RNA.</text>
</comment>
<comment type="similarity">
    <text evidence="1">Belongs to the bacterial ribosomal protein bS20 family.</text>
</comment>
<name>RS20_FRATH</name>
<dbReference type="EMBL" id="AM233362">
    <property type="protein sequence ID" value="CAJ78511.1"/>
    <property type="molecule type" value="Genomic_DNA"/>
</dbReference>
<dbReference type="RefSeq" id="WP_003014020.1">
    <property type="nucleotide sequence ID" value="NZ_CP009694.1"/>
</dbReference>
<dbReference type="SMR" id="Q2A5X7"/>
<dbReference type="KEGG" id="ftl:FTL_0070"/>
<dbReference type="Proteomes" id="UP000001944">
    <property type="component" value="Chromosome"/>
</dbReference>
<dbReference type="GO" id="GO:0005829">
    <property type="term" value="C:cytosol"/>
    <property type="evidence" value="ECO:0007669"/>
    <property type="project" value="TreeGrafter"/>
</dbReference>
<dbReference type="GO" id="GO:0015935">
    <property type="term" value="C:small ribosomal subunit"/>
    <property type="evidence" value="ECO:0007669"/>
    <property type="project" value="TreeGrafter"/>
</dbReference>
<dbReference type="GO" id="GO:0070181">
    <property type="term" value="F:small ribosomal subunit rRNA binding"/>
    <property type="evidence" value="ECO:0007669"/>
    <property type="project" value="TreeGrafter"/>
</dbReference>
<dbReference type="GO" id="GO:0003735">
    <property type="term" value="F:structural constituent of ribosome"/>
    <property type="evidence" value="ECO:0007669"/>
    <property type="project" value="InterPro"/>
</dbReference>
<dbReference type="GO" id="GO:0006412">
    <property type="term" value="P:translation"/>
    <property type="evidence" value="ECO:0007669"/>
    <property type="project" value="UniProtKB-UniRule"/>
</dbReference>
<dbReference type="FunFam" id="1.20.58.110:FF:000001">
    <property type="entry name" value="30S ribosomal protein S20"/>
    <property type="match status" value="1"/>
</dbReference>
<dbReference type="Gene3D" id="1.20.58.110">
    <property type="entry name" value="Ribosomal protein S20"/>
    <property type="match status" value="1"/>
</dbReference>
<dbReference type="HAMAP" id="MF_00500">
    <property type="entry name" value="Ribosomal_bS20"/>
    <property type="match status" value="1"/>
</dbReference>
<dbReference type="InterPro" id="IPR002583">
    <property type="entry name" value="Ribosomal_bS20"/>
</dbReference>
<dbReference type="InterPro" id="IPR036510">
    <property type="entry name" value="Ribosomal_bS20_sf"/>
</dbReference>
<dbReference type="NCBIfam" id="TIGR00029">
    <property type="entry name" value="S20"/>
    <property type="match status" value="1"/>
</dbReference>
<dbReference type="PANTHER" id="PTHR33398">
    <property type="entry name" value="30S RIBOSOMAL PROTEIN S20"/>
    <property type="match status" value="1"/>
</dbReference>
<dbReference type="PANTHER" id="PTHR33398:SF1">
    <property type="entry name" value="SMALL RIBOSOMAL SUBUNIT PROTEIN BS20C"/>
    <property type="match status" value="1"/>
</dbReference>
<dbReference type="Pfam" id="PF01649">
    <property type="entry name" value="Ribosomal_S20p"/>
    <property type="match status" value="1"/>
</dbReference>
<dbReference type="SUPFAM" id="SSF46992">
    <property type="entry name" value="Ribosomal protein S20"/>
    <property type="match status" value="1"/>
</dbReference>
<reference key="1">
    <citation type="submission" date="2006-03" db="EMBL/GenBank/DDBJ databases">
        <title>Complete genome sequence of Francisella tularensis LVS (Live Vaccine Strain).</title>
        <authorList>
            <person name="Chain P."/>
            <person name="Larimer F."/>
            <person name="Land M."/>
            <person name="Stilwagen S."/>
            <person name="Larsson P."/>
            <person name="Bearden S."/>
            <person name="Chu M."/>
            <person name="Oyston P."/>
            <person name="Forsman M."/>
            <person name="Andersson S."/>
            <person name="Lindler L."/>
            <person name="Titball R."/>
            <person name="Garcia E."/>
        </authorList>
    </citation>
    <scope>NUCLEOTIDE SEQUENCE [LARGE SCALE GENOMIC DNA]</scope>
    <source>
        <strain>LVS</strain>
    </source>
</reference>
<sequence length="90" mass="10147">MANSKQAKKRIIQAERNRQHNVARRSMMRTFLKKTAYAIEKGDVEAAKENFTKVVPILDKYASKGLIHKNKAARHKSRLSAKIKALATAA</sequence>
<proteinExistence type="inferred from homology"/>